<reference key="1">
    <citation type="journal article" date="1991" name="Curr. Genet.">
        <title>A small gene family in barley encodes ribosomal proteins homologous to yeast YL17 and L22 from archaebacteria, eubacteria, and chloroplasts.</title>
        <authorList>
            <person name="Madsen L.H."/>
            <person name="Kreiberg J.D."/>
            <person name="Gausing K."/>
        </authorList>
    </citation>
    <scope>NUCLEOTIDE SEQUENCE [MRNA]</scope>
    <source>
        <strain>cv. Bomi</strain>
        <tissue>Leaf</tissue>
    </source>
</reference>
<feature type="chain" id="PRO_0000125339" description="Large ribosomal subunit protein uL22y">
    <location>
        <begin position="1"/>
        <end position="172"/>
    </location>
</feature>
<comment type="similarity">
    <text evidence="1">Belongs to the universal ribosomal protein uL22 family.</text>
</comment>
<proteinExistence type="evidence at transcript level"/>
<protein>
    <recommendedName>
        <fullName evidence="1">Large ribosomal subunit protein uL22y</fullName>
    </recommendedName>
    <alternativeName>
        <fullName>60S ribosomal protein L17-2</fullName>
    </alternativeName>
</protein>
<accession>P35267</accession>
<name>RL172_HORVU</name>
<dbReference type="EMBL" id="X62725">
    <property type="protein sequence ID" value="CAA44599.1"/>
    <property type="molecule type" value="mRNA"/>
</dbReference>
<dbReference type="PIR" id="S32579">
    <property type="entry name" value="S32579"/>
</dbReference>
<dbReference type="SMR" id="P35267"/>
<dbReference type="OMA" id="KPMISCK"/>
<dbReference type="ExpressionAtlas" id="P35267">
    <property type="expression patterns" value="baseline and differential"/>
</dbReference>
<dbReference type="GO" id="GO:0022625">
    <property type="term" value="C:cytosolic large ribosomal subunit"/>
    <property type="evidence" value="ECO:0007669"/>
    <property type="project" value="TreeGrafter"/>
</dbReference>
<dbReference type="GO" id="GO:0003735">
    <property type="term" value="F:structural constituent of ribosome"/>
    <property type="evidence" value="ECO:0007669"/>
    <property type="project" value="InterPro"/>
</dbReference>
<dbReference type="GO" id="GO:0002181">
    <property type="term" value="P:cytoplasmic translation"/>
    <property type="evidence" value="ECO:0007669"/>
    <property type="project" value="TreeGrafter"/>
</dbReference>
<dbReference type="CDD" id="cd00336">
    <property type="entry name" value="Ribosomal_L22"/>
    <property type="match status" value="1"/>
</dbReference>
<dbReference type="FunFam" id="3.90.470.10:FF:000005">
    <property type="entry name" value="60S ribosomal protein L17"/>
    <property type="match status" value="1"/>
</dbReference>
<dbReference type="Gene3D" id="3.90.470.10">
    <property type="entry name" value="Ribosomal protein L22/L17"/>
    <property type="match status" value="1"/>
</dbReference>
<dbReference type="HAMAP" id="MF_01331_A">
    <property type="entry name" value="Ribosomal_uL22_A"/>
    <property type="match status" value="1"/>
</dbReference>
<dbReference type="InterPro" id="IPR001063">
    <property type="entry name" value="Ribosomal_uL22"/>
</dbReference>
<dbReference type="InterPro" id="IPR018260">
    <property type="entry name" value="Ribosomal_uL22_CS"/>
</dbReference>
<dbReference type="InterPro" id="IPR005721">
    <property type="entry name" value="Ribosomal_uL22_euk/arc"/>
</dbReference>
<dbReference type="InterPro" id="IPR036394">
    <property type="entry name" value="Ribosomal_uL22_sf"/>
</dbReference>
<dbReference type="NCBIfam" id="NF003260">
    <property type="entry name" value="PRK04223.1"/>
    <property type="match status" value="1"/>
</dbReference>
<dbReference type="NCBIfam" id="TIGR01038">
    <property type="entry name" value="uL22_arch_euk"/>
    <property type="match status" value="1"/>
</dbReference>
<dbReference type="PANTHER" id="PTHR11593">
    <property type="entry name" value="60S RIBOSOMAL PROTEIN L17"/>
    <property type="match status" value="1"/>
</dbReference>
<dbReference type="PANTHER" id="PTHR11593:SF22">
    <property type="entry name" value="RIBOSOMAL PROTEIN L22"/>
    <property type="match status" value="1"/>
</dbReference>
<dbReference type="Pfam" id="PF00237">
    <property type="entry name" value="Ribosomal_L22"/>
    <property type="match status" value="1"/>
</dbReference>
<dbReference type="SUPFAM" id="SSF54843">
    <property type="entry name" value="Ribosomal protein L22"/>
    <property type="match status" value="1"/>
</dbReference>
<dbReference type="PROSITE" id="PS00464">
    <property type="entry name" value="RIBOSOMAL_L22"/>
    <property type="match status" value="1"/>
</dbReference>
<evidence type="ECO:0000305" key="1"/>
<keyword id="KW-0687">Ribonucleoprotein</keyword>
<keyword id="KW-0689">Ribosomal protein</keyword>
<sequence length="172" mass="19705">MVKYSRDPSNPTKSAKACGKDLRVHFKNTRETAFALRRMPLGKAKRYLEDVLAHKQAIPFRRYCRGVGRTAQVKNRQPNGQGRWPAKSAQFVLDLLKNAESNAEVKGLDVDNLYISHIQVNQAQKQRRRTYRAHGRINPYMSNPCHIELILSEKEEPVKKEADNVVAPRKAI</sequence>
<organism>
    <name type="scientific">Hordeum vulgare</name>
    <name type="common">Barley</name>
    <dbReference type="NCBI Taxonomy" id="4513"/>
    <lineage>
        <taxon>Eukaryota</taxon>
        <taxon>Viridiplantae</taxon>
        <taxon>Streptophyta</taxon>
        <taxon>Embryophyta</taxon>
        <taxon>Tracheophyta</taxon>
        <taxon>Spermatophyta</taxon>
        <taxon>Magnoliopsida</taxon>
        <taxon>Liliopsida</taxon>
        <taxon>Poales</taxon>
        <taxon>Poaceae</taxon>
        <taxon>BOP clade</taxon>
        <taxon>Pooideae</taxon>
        <taxon>Triticodae</taxon>
        <taxon>Triticeae</taxon>
        <taxon>Hordeinae</taxon>
        <taxon>Hordeum</taxon>
    </lineage>
</organism>